<feature type="transit peptide" description="Mitochondrion" evidence="7">
    <location>
        <begin position="1"/>
        <end position="32"/>
    </location>
</feature>
<feature type="chain" id="PRO_0000158659" description="Succinate dehydrogenase [ubiquinone] flavoprotein subunit 1, mitochondrial">
    <location>
        <begin position="33"/>
        <end position="634"/>
    </location>
</feature>
<feature type="active site" description="Proton acceptor" evidence="3">
    <location>
        <position position="329"/>
    </location>
</feature>
<feature type="binding site" evidence="3">
    <location>
        <begin position="56"/>
        <end position="61"/>
    </location>
    <ligand>
        <name>FAD</name>
        <dbReference type="ChEBI" id="CHEBI:57692"/>
    </ligand>
</feature>
<feature type="binding site" evidence="3">
    <location>
        <begin position="79"/>
        <end position="94"/>
    </location>
    <ligand>
        <name>FAD</name>
        <dbReference type="ChEBI" id="CHEBI:57692"/>
    </ligand>
</feature>
<feature type="binding site" evidence="3">
    <location>
        <position position="264"/>
    </location>
    <ligand>
        <name>FAD</name>
        <dbReference type="ChEBI" id="CHEBI:57692"/>
    </ligand>
</feature>
<feature type="binding site" evidence="3">
    <location>
        <position position="285"/>
    </location>
    <ligand>
        <name>substrate</name>
    </ligand>
</feature>
<feature type="binding site" evidence="3">
    <location>
        <position position="297"/>
    </location>
    <ligand>
        <name>substrate</name>
    </ligand>
</feature>
<feature type="binding site" evidence="3">
    <location>
        <position position="396"/>
    </location>
    <ligand>
        <name>substrate</name>
    </ligand>
</feature>
<feature type="binding site" evidence="3">
    <location>
        <position position="430"/>
    </location>
    <ligand>
        <name>FAD</name>
        <dbReference type="ChEBI" id="CHEBI:57692"/>
    </ligand>
</feature>
<feature type="binding site" evidence="3">
    <location>
        <position position="441"/>
    </location>
    <ligand>
        <name>substrate</name>
    </ligand>
</feature>
<feature type="binding site" evidence="3">
    <location>
        <begin position="446"/>
        <end position="447"/>
    </location>
    <ligand>
        <name>FAD</name>
        <dbReference type="ChEBI" id="CHEBI:57692"/>
    </ligand>
</feature>
<feature type="modified residue" description="Tele-8alpha-FAD histidine" evidence="3">
    <location>
        <position position="87"/>
    </location>
</feature>
<keyword id="KW-0903">Direct protein sequencing</keyword>
<keyword id="KW-0249">Electron transport</keyword>
<keyword id="KW-0274">FAD</keyword>
<keyword id="KW-0285">Flavoprotein</keyword>
<keyword id="KW-0472">Membrane</keyword>
<keyword id="KW-0496">Mitochondrion</keyword>
<keyword id="KW-0999">Mitochondrion inner membrane</keyword>
<keyword id="KW-0560">Oxidoreductase</keyword>
<keyword id="KW-1185">Reference proteome</keyword>
<keyword id="KW-0809">Transit peptide</keyword>
<keyword id="KW-0813">Transport</keyword>
<keyword id="KW-0816">Tricarboxylic acid cycle</keyword>
<organism>
    <name type="scientific">Arabidopsis thaliana</name>
    <name type="common">Mouse-ear cress</name>
    <dbReference type="NCBI Taxonomy" id="3702"/>
    <lineage>
        <taxon>Eukaryota</taxon>
        <taxon>Viridiplantae</taxon>
        <taxon>Streptophyta</taxon>
        <taxon>Embryophyta</taxon>
        <taxon>Tracheophyta</taxon>
        <taxon>Spermatophyta</taxon>
        <taxon>Magnoliopsida</taxon>
        <taxon>eudicotyledons</taxon>
        <taxon>Gunneridae</taxon>
        <taxon>Pentapetalae</taxon>
        <taxon>rosids</taxon>
        <taxon>malvids</taxon>
        <taxon>Brassicales</taxon>
        <taxon>Brassicaceae</taxon>
        <taxon>Camelineae</taxon>
        <taxon>Arabidopsis</taxon>
    </lineage>
</organism>
<comment type="function">
    <text evidence="1">Flavoprotein (FP) subunit of succinate dehydrogenase (SDH) that is involved in complex II of the mitochondrial electron transport chain and is responsible for transferring electrons from succinate to ubiquinone (coenzyme Q).</text>
</comment>
<comment type="catalytic activity">
    <reaction evidence="1">
        <text>a quinone + succinate = fumarate + a quinol</text>
        <dbReference type="Rhea" id="RHEA:40523"/>
        <dbReference type="ChEBI" id="CHEBI:24646"/>
        <dbReference type="ChEBI" id="CHEBI:29806"/>
        <dbReference type="ChEBI" id="CHEBI:30031"/>
        <dbReference type="ChEBI" id="CHEBI:132124"/>
        <dbReference type="EC" id="1.3.5.1"/>
    </reaction>
</comment>
<comment type="cofactor">
    <cofactor evidence="2">
        <name>FAD</name>
        <dbReference type="ChEBI" id="CHEBI:57692"/>
    </cofactor>
</comment>
<comment type="pathway">
    <text evidence="1">Carbohydrate metabolism; tricarboxylic acid cycle; fumarate from succinate (eukaryal route): step 1/1.</text>
</comment>
<comment type="subunit">
    <text evidence="6">Component of complex II composed of eight subunits in plants: four classical SDH subunits SDH1, SDH2, SDH3 and SDH4 (a flavoprotein (FP), an iron-sulfur protein (IP), and a cytochrome b composed of a large and a small subunit.), as well as four subunits unknown in mitochondria from bacteria and heterotrophic eukaryotes.</text>
</comment>
<comment type="subcellular location">
    <subcellularLocation>
        <location evidence="5 9">Mitochondrion inner membrane</location>
        <topology evidence="5">Peripheral membrane protein</topology>
        <orientation evidence="5">Matrix side</orientation>
    </subcellularLocation>
</comment>
<comment type="tissue specificity">
    <text evidence="4">Ubiquitous. Preferentially expressed in flowers and inflorescences.</text>
</comment>
<comment type="similarity">
    <text evidence="8">Belongs to the FAD-dependent oxidoreductase 2 family. FRD/SDH subfamily.</text>
</comment>
<dbReference type="EC" id="1.3.5.1" evidence="1"/>
<dbReference type="EMBL" id="AJ001809">
    <property type="protein sequence ID" value="CAA05025.1"/>
    <property type="molecule type" value="mRNA"/>
</dbReference>
<dbReference type="EMBL" id="AB018119">
    <property type="protein sequence ID" value="BAA97282.1"/>
    <property type="molecule type" value="Genomic_DNA"/>
</dbReference>
<dbReference type="EMBL" id="CP002688">
    <property type="protein sequence ID" value="AED98260.1"/>
    <property type="molecule type" value="Genomic_DNA"/>
</dbReference>
<dbReference type="EMBL" id="AF367341">
    <property type="protein sequence ID" value="AAK32928.1"/>
    <property type="molecule type" value="mRNA"/>
</dbReference>
<dbReference type="EMBL" id="AY045674">
    <property type="protein sequence ID" value="AAK74032.1"/>
    <property type="molecule type" value="mRNA"/>
</dbReference>
<dbReference type="EMBL" id="AF436833">
    <property type="protein sequence ID" value="AAL32015.1"/>
    <property type="molecule type" value="mRNA"/>
</dbReference>
<dbReference type="EMBL" id="AY124812">
    <property type="protein sequence ID" value="AAM70521.1"/>
    <property type="molecule type" value="mRNA"/>
</dbReference>
<dbReference type="PIR" id="T51815">
    <property type="entry name" value="T51815"/>
</dbReference>
<dbReference type="RefSeq" id="NP_201477.1">
    <property type="nucleotide sequence ID" value="NM_126074.3"/>
</dbReference>
<dbReference type="SMR" id="O82663"/>
<dbReference type="BioGRID" id="22051">
    <property type="interactions" value="13"/>
</dbReference>
<dbReference type="FunCoup" id="O82663">
    <property type="interactions" value="2623"/>
</dbReference>
<dbReference type="IntAct" id="O82663">
    <property type="interactions" value="2"/>
</dbReference>
<dbReference type="MINT" id="O82663"/>
<dbReference type="STRING" id="3702.O82663"/>
<dbReference type="SwissPalm" id="O82663"/>
<dbReference type="PaxDb" id="3702-AT5G66760.1"/>
<dbReference type="ProteomicsDB" id="232967"/>
<dbReference type="EnsemblPlants" id="AT5G66760.1">
    <property type="protein sequence ID" value="AT5G66760.1"/>
    <property type="gene ID" value="AT5G66760"/>
</dbReference>
<dbReference type="GeneID" id="836809"/>
<dbReference type="Gramene" id="AT5G66760.1">
    <property type="protein sequence ID" value="AT5G66760.1"/>
    <property type="gene ID" value="AT5G66760"/>
</dbReference>
<dbReference type="KEGG" id="ath:AT5G66760"/>
<dbReference type="Araport" id="AT5G66760"/>
<dbReference type="TAIR" id="AT5G66760">
    <property type="gene designation" value="SDH1-1"/>
</dbReference>
<dbReference type="eggNOG" id="KOG2403">
    <property type="taxonomic scope" value="Eukaryota"/>
</dbReference>
<dbReference type="HOGENOM" id="CLU_014312_6_1_1"/>
<dbReference type="InParanoid" id="O82663"/>
<dbReference type="OMA" id="NRCAETI"/>
<dbReference type="OrthoDB" id="1054664at2759"/>
<dbReference type="PhylomeDB" id="O82663"/>
<dbReference type="BioCyc" id="ARA:AT5G66760-MONOMER"/>
<dbReference type="BioCyc" id="MetaCyc:AT5G66760-MONOMER"/>
<dbReference type="UniPathway" id="UPA00223">
    <property type="reaction ID" value="UER01006"/>
</dbReference>
<dbReference type="CD-CODE" id="4299E36E">
    <property type="entry name" value="Nucleolus"/>
</dbReference>
<dbReference type="PRO" id="PR:O82663"/>
<dbReference type="Proteomes" id="UP000006548">
    <property type="component" value="Chromosome 5"/>
</dbReference>
<dbReference type="ExpressionAtlas" id="O82663">
    <property type="expression patterns" value="baseline and differential"/>
</dbReference>
<dbReference type="GO" id="GO:0005743">
    <property type="term" value="C:mitochondrial inner membrane"/>
    <property type="evidence" value="ECO:0007669"/>
    <property type="project" value="UniProtKB-SubCell"/>
</dbReference>
<dbReference type="GO" id="GO:0005739">
    <property type="term" value="C:mitochondrion"/>
    <property type="evidence" value="ECO:0000314"/>
    <property type="project" value="TAIR"/>
</dbReference>
<dbReference type="GO" id="GO:0009505">
    <property type="term" value="C:plant-type cell wall"/>
    <property type="evidence" value="ECO:0007005"/>
    <property type="project" value="TAIR"/>
</dbReference>
<dbReference type="GO" id="GO:0009536">
    <property type="term" value="C:plastid"/>
    <property type="evidence" value="ECO:0007005"/>
    <property type="project" value="TAIR"/>
</dbReference>
<dbReference type="GO" id="GO:0045273">
    <property type="term" value="C:respiratory chain complex II (succinate dehydrogenase)"/>
    <property type="evidence" value="ECO:0000314"/>
    <property type="project" value="UniProtKB"/>
</dbReference>
<dbReference type="GO" id="GO:0005524">
    <property type="term" value="F:ATP binding"/>
    <property type="evidence" value="ECO:0007005"/>
    <property type="project" value="TAIR"/>
</dbReference>
<dbReference type="GO" id="GO:0050897">
    <property type="term" value="F:cobalt ion binding"/>
    <property type="evidence" value="ECO:0007005"/>
    <property type="project" value="TAIR"/>
</dbReference>
<dbReference type="GO" id="GO:0050660">
    <property type="term" value="F:flavin adenine dinucleotide binding"/>
    <property type="evidence" value="ECO:0007669"/>
    <property type="project" value="InterPro"/>
</dbReference>
<dbReference type="GO" id="GO:0008177">
    <property type="term" value="F:succinate dehydrogenase (quinone) activity"/>
    <property type="evidence" value="ECO:0007669"/>
    <property type="project" value="UniProtKB-EC"/>
</dbReference>
<dbReference type="GO" id="GO:0000104">
    <property type="term" value="F:succinate dehydrogenase activity"/>
    <property type="evidence" value="ECO:0000304"/>
    <property type="project" value="TAIR"/>
</dbReference>
<dbReference type="GO" id="GO:0006121">
    <property type="term" value="P:mitochondrial electron transport, succinate to ubiquinone"/>
    <property type="evidence" value="ECO:0000304"/>
    <property type="project" value="TAIR"/>
</dbReference>
<dbReference type="GO" id="GO:0006099">
    <property type="term" value="P:tricarboxylic acid cycle"/>
    <property type="evidence" value="ECO:0007669"/>
    <property type="project" value="UniProtKB-UniPathway"/>
</dbReference>
<dbReference type="FunFam" id="3.90.700.10:FF:000001">
    <property type="entry name" value="Mitochondrial succinate dehydrogenase flavoprotein subunit"/>
    <property type="match status" value="1"/>
</dbReference>
<dbReference type="FunFam" id="3.50.50.60:FF:000405">
    <property type="entry name" value="Succinate dehydrogenase [ubiquinone] flavoprotein subunit, mitochondrial"/>
    <property type="match status" value="1"/>
</dbReference>
<dbReference type="FunFam" id="4.10.80.40:FF:000002">
    <property type="entry name" value="Succinate dehydrogenase [ubiquinone] flavoprotein subunit, mitochondrial"/>
    <property type="match status" value="1"/>
</dbReference>
<dbReference type="FunFam" id="3.50.50.60:FF:000482">
    <property type="entry name" value="Succinate dehydrogenase complex, subunit A, flavoprotein (Fp)"/>
    <property type="match status" value="1"/>
</dbReference>
<dbReference type="FunFam" id="1.20.58.100:FF:000001">
    <property type="entry name" value="Succinate dehydrogenase flavoprotein subunit (SdhA)"/>
    <property type="match status" value="1"/>
</dbReference>
<dbReference type="Gene3D" id="3.50.50.60">
    <property type="entry name" value="FAD/NAD(P)-binding domain"/>
    <property type="match status" value="1"/>
</dbReference>
<dbReference type="Gene3D" id="1.20.58.100">
    <property type="entry name" value="Fumarate reductase/succinate dehydrogenase flavoprotein-like, C-terminal domain"/>
    <property type="match status" value="1"/>
</dbReference>
<dbReference type="Gene3D" id="4.10.80.40">
    <property type="entry name" value="succinate dehydrogenase protein domain"/>
    <property type="match status" value="1"/>
</dbReference>
<dbReference type="Gene3D" id="3.90.700.10">
    <property type="entry name" value="Succinate dehydrogenase/fumarate reductase flavoprotein, catalytic domain"/>
    <property type="match status" value="1"/>
</dbReference>
<dbReference type="InterPro" id="IPR003953">
    <property type="entry name" value="FAD-dep_OxRdtase_2_FAD-bd"/>
</dbReference>
<dbReference type="InterPro" id="IPR036188">
    <property type="entry name" value="FAD/NAD-bd_sf"/>
</dbReference>
<dbReference type="InterPro" id="IPR003952">
    <property type="entry name" value="FRD_SDH_FAD_BS"/>
</dbReference>
<dbReference type="InterPro" id="IPR037099">
    <property type="entry name" value="Fum_R/Succ_DH_flav-like_C_sf"/>
</dbReference>
<dbReference type="InterPro" id="IPR015939">
    <property type="entry name" value="Fum_Rdtase/Succ_DH_flav-like_C"/>
</dbReference>
<dbReference type="InterPro" id="IPR030664">
    <property type="entry name" value="SdhA/FrdA/AprA"/>
</dbReference>
<dbReference type="InterPro" id="IPR027477">
    <property type="entry name" value="Succ_DH/fumarate_Rdtase_cat_sf"/>
</dbReference>
<dbReference type="InterPro" id="IPR011281">
    <property type="entry name" value="Succ_DH_flav_su_fwd"/>
</dbReference>
<dbReference type="InterPro" id="IPR014006">
    <property type="entry name" value="Succ_Dhase_FrdA_Gneg"/>
</dbReference>
<dbReference type="NCBIfam" id="TIGR01816">
    <property type="entry name" value="sdhA_forward"/>
    <property type="match status" value="1"/>
</dbReference>
<dbReference type="NCBIfam" id="TIGR01812">
    <property type="entry name" value="sdhA_frdA_Gneg"/>
    <property type="match status" value="1"/>
</dbReference>
<dbReference type="PANTHER" id="PTHR11632">
    <property type="entry name" value="SUCCINATE DEHYDROGENASE 2 FLAVOPROTEIN SUBUNIT"/>
    <property type="match status" value="1"/>
</dbReference>
<dbReference type="PANTHER" id="PTHR11632:SF51">
    <property type="entry name" value="SUCCINATE DEHYDROGENASE [UBIQUINONE] FLAVOPROTEIN SUBUNIT, MITOCHONDRIAL"/>
    <property type="match status" value="1"/>
</dbReference>
<dbReference type="Pfam" id="PF00890">
    <property type="entry name" value="FAD_binding_2"/>
    <property type="match status" value="1"/>
</dbReference>
<dbReference type="Pfam" id="PF02910">
    <property type="entry name" value="Succ_DH_flav_C"/>
    <property type="match status" value="1"/>
</dbReference>
<dbReference type="PIRSF" id="PIRSF000171">
    <property type="entry name" value="SDHA_APRA_LASPO"/>
    <property type="match status" value="1"/>
</dbReference>
<dbReference type="SUPFAM" id="SSF51905">
    <property type="entry name" value="FAD/NAD(P)-binding domain"/>
    <property type="match status" value="1"/>
</dbReference>
<dbReference type="SUPFAM" id="SSF46977">
    <property type="entry name" value="Succinate dehydrogenase/fumarate reductase flavoprotein C-terminal domain"/>
    <property type="match status" value="1"/>
</dbReference>
<dbReference type="SUPFAM" id="SSF56425">
    <property type="entry name" value="Succinate dehydrogenase/fumarate reductase flavoprotein, catalytic domain"/>
    <property type="match status" value="1"/>
</dbReference>
<dbReference type="PROSITE" id="PS00504">
    <property type="entry name" value="FRD_SDH_FAD_BINDING"/>
    <property type="match status" value="1"/>
</dbReference>
<name>SDHA1_ARATH</name>
<reference key="1">
    <citation type="submission" date="1997-09" db="EMBL/GenBank/DDBJ databases">
        <title>Cloning and characterization of succinyl-CoA-ligase from Arabidopsis thaliana.</title>
        <authorList>
            <person name="Machuy N."/>
            <person name="Klein M."/>
            <person name="Mueller-Roeber B."/>
        </authorList>
    </citation>
    <scope>NUCLEOTIDE SEQUENCE [MRNA]</scope>
    <source>
        <strain>cv. C24</strain>
    </source>
</reference>
<reference key="2">
    <citation type="journal article" date="2000" name="DNA Res.">
        <title>Structural analysis of Arabidopsis thaliana chromosome 5. X. Sequence features of the regions of 3,076,755 bp covered by sixty P1 and TAC clones.</title>
        <authorList>
            <person name="Sato S."/>
            <person name="Nakamura Y."/>
            <person name="Kaneko T."/>
            <person name="Katoh T."/>
            <person name="Asamizu E."/>
            <person name="Kotani H."/>
            <person name="Tabata S."/>
        </authorList>
    </citation>
    <scope>NUCLEOTIDE SEQUENCE [LARGE SCALE GENOMIC DNA]</scope>
    <source>
        <strain>cv. Columbia</strain>
    </source>
</reference>
<reference key="3">
    <citation type="journal article" date="2017" name="Plant J.">
        <title>Araport11: a complete reannotation of the Arabidopsis thaliana reference genome.</title>
        <authorList>
            <person name="Cheng C.Y."/>
            <person name="Krishnakumar V."/>
            <person name="Chan A.P."/>
            <person name="Thibaud-Nissen F."/>
            <person name="Schobel S."/>
            <person name="Town C.D."/>
        </authorList>
    </citation>
    <scope>GENOME REANNOTATION</scope>
    <source>
        <strain>cv. Columbia</strain>
    </source>
</reference>
<reference key="4">
    <citation type="journal article" date="2003" name="Science">
        <title>Empirical analysis of transcriptional activity in the Arabidopsis genome.</title>
        <authorList>
            <person name="Yamada K."/>
            <person name="Lim J."/>
            <person name="Dale J.M."/>
            <person name="Chen H."/>
            <person name="Shinn P."/>
            <person name="Palm C.J."/>
            <person name="Southwick A.M."/>
            <person name="Wu H.C."/>
            <person name="Kim C.J."/>
            <person name="Nguyen M."/>
            <person name="Pham P.K."/>
            <person name="Cheuk R.F."/>
            <person name="Karlin-Newmann G."/>
            <person name="Liu S.X."/>
            <person name="Lam B."/>
            <person name="Sakano H."/>
            <person name="Wu T."/>
            <person name="Yu G."/>
            <person name="Miranda M."/>
            <person name="Quach H.L."/>
            <person name="Tripp M."/>
            <person name="Chang C.H."/>
            <person name="Lee J.M."/>
            <person name="Toriumi M.J."/>
            <person name="Chan M.M."/>
            <person name="Tang C.C."/>
            <person name="Onodera C.S."/>
            <person name="Deng J.M."/>
            <person name="Akiyama K."/>
            <person name="Ansari Y."/>
            <person name="Arakawa T."/>
            <person name="Banh J."/>
            <person name="Banno F."/>
            <person name="Bowser L."/>
            <person name="Brooks S.Y."/>
            <person name="Carninci P."/>
            <person name="Chao Q."/>
            <person name="Choy N."/>
            <person name="Enju A."/>
            <person name="Goldsmith A.D."/>
            <person name="Gurjal M."/>
            <person name="Hansen N.F."/>
            <person name="Hayashizaki Y."/>
            <person name="Johnson-Hopson C."/>
            <person name="Hsuan V.W."/>
            <person name="Iida K."/>
            <person name="Karnes M."/>
            <person name="Khan S."/>
            <person name="Koesema E."/>
            <person name="Ishida J."/>
            <person name="Jiang P.X."/>
            <person name="Jones T."/>
            <person name="Kawai J."/>
            <person name="Kamiya A."/>
            <person name="Meyers C."/>
            <person name="Nakajima M."/>
            <person name="Narusaka M."/>
            <person name="Seki M."/>
            <person name="Sakurai T."/>
            <person name="Satou M."/>
            <person name="Tamse R."/>
            <person name="Vaysberg M."/>
            <person name="Wallender E.K."/>
            <person name="Wong C."/>
            <person name="Yamamura Y."/>
            <person name="Yuan S."/>
            <person name="Shinozaki K."/>
            <person name="Davis R.W."/>
            <person name="Theologis A."/>
            <person name="Ecker J.R."/>
        </authorList>
    </citation>
    <scope>NUCLEOTIDE SEQUENCE [LARGE SCALE MRNA]</scope>
    <source>
        <strain>cv. Columbia</strain>
    </source>
</reference>
<reference key="5">
    <citation type="journal article" date="2001" name="Plant Physiol.">
        <title>Proteomic approach to identify novel mitochondrial proteins in Arabidopsis.</title>
        <authorList>
            <person name="Kruft V."/>
            <person name="Eubel H."/>
            <person name="Jaensch L."/>
            <person name="Werhahn W."/>
            <person name="Braun H.-P."/>
        </authorList>
    </citation>
    <scope>PROTEIN SEQUENCE OF 160-170</scope>
    <source>
        <tissue>Leaf</tissue>
        <tissue>Stem</tissue>
    </source>
</reference>
<reference key="6">
    <citation type="journal article" date="2002" name="Plant Mol. Biol.">
        <title>The four subunits of mitochondrial respiratory complex II are encoded by multiple nuclear genes and targeted to mitochondria in Arabidopsis thaliana.</title>
        <authorList>
            <person name="Figueroa P."/>
            <person name="Leon G."/>
            <person name="Elorza A."/>
            <person name="Holuigue L."/>
            <person name="Araya A."/>
            <person name="Jordana X."/>
        </authorList>
    </citation>
    <scope>TISSUE SPECIFICITY</scope>
</reference>
<reference key="7">
    <citation type="journal article" date="2004" name="Plant Cell">
        <title>Experimental analysis of the Arabidopsis mitochondrial proteome highlights signaling and regulatory components, provides assessment of targeting prediction programs, and indicates plant-specific mitochondrial proteins.</title>
        <authorList>
            <person name="Heazlewood J.L."/>
            <person name="Tonti-Filippini J.S."/>
            <person name="Gout A.M."/>
            <person name="Day D.A."/>
            <person name="Whelan J."/>
            <person name="Millar A.H."/>
        </authorList>
    </citation>
    <scope>IDENTIFICATION BY MASS SPECTROMETRY</scope>
    <scope>SUBCELLULAR LOCATION [LARGE SCALE ANALYSIS]</scope>
    <source>
        <strain>cv. Landsberg erecta</strain>
    </source>
</reference>
<reference key="8">
    <citation type="journal article" date="2004" name="Plant Mol. Biol.">
        <title>Mitochondrial cytochrome c oxidase and succinate dehydrogenase complexes contain plant specific subunits.</title>
        <authorList>
            <person name="Millar A.H."/>
            <person name="Eubel H."/>
            <person name="Jansch L."/>
            <person name="Kruft V."/>
            <person name="Heazlewood J.L."/>
            <person name="Braun H.P."/>
        </authorList>
    </citation>
    <scope>IDENTIFICATION BY MASS SPECTROMETRY</scope>
    <scope>SUBUNIT</scope>
</reference>
<reference key="9">
    <citation type="journal article" date="2015" name="J. Exp. Bot.">
        <title>Identification of cleavage sites and substrate proteins for two mitochondrial intermediate peptidases in Arabidopsis thaliana.</title>
        <authorList>
            <person name="Carrie C."/>
            <person name="Venne A.S."/>
            <person name="Zahedi R.P."/>
            <person name="Soll J."/>
        </authorList>
    </citation>
    <scope>IDENTIFICATION BY MASS SPECTROMETRY</scope>
    <scope>CLEAVAGE OF TRANSIT PEPTIDE AFTER PHE-32</scope>
</reference>
<accession>O82663</accession>
<gene>
    <name type="primary">SDH1-1</name>
    <name type="ordered locus">At5g66760</name>
    <name type="ORF">MSN2.16</name>
</gene>
<protein>
    <recommendedName>
        <fullName>Succinate dehydrogenase [ubiquinone] flavoprotein subunit 1, mitochondrial</fullName>
        <ecNumber evidence="1">1.3.5.1</ecNumber>
    </recommendedName>
    <alternativeName>
        <fullName>Flavoprotein subunit 1 of complex II</fullName>
        <shortName>FP</shortName>
    </alternativeName>
</protein>
<evidence type="ECO:0000250" key="1">
    <source>
        <dbReference type="UniProtKB" id="P31040"/>
    </source>
</evidence>
<evidence type="ECO:0000250" key="2">
    <source>
        <dbReference type="UniProtKB" id="Q0QF01"/>
    </source>
</evidence>
<evidence type="ECO:0000250" key="3">
    <source>
        <dbReference type="UniProtKB" id="Q9YHT1"/>
    </source>
</evidence>
<evidence type="ECO:0000269" key="4">
    <source>
    </source>
</evidence>
<evidence type="ECO:0000269" key="5">
    <source>
    </source>
</evidence>
<evidence type="ECO:0000269" key="6">
    <source>
    </source>
</evidence>
<evidence type="ECO:0000269" key="7">
    <source>
    </source>
</evidence>
<evidence type="ECO:0000305" key="8"/>
<evidence type="ECO:0000305" key="9">
    <source>
    </source>
</evidence>
<proteinExistence type="evidence at protein level"/>
<sequence>MWRCVSRGFRAPASKTSSLFDGVSGSRFSRFFSTGSTDTRSSYTIVDHTYDAVVVGAGGAGLRAAIGLSEHGFNTACITKLFPTRSHTVAAQGGINAALGNMSEDDWRWHMYDTVKGSDWLGDQDAIQYMCREAPKAVIELENYGLPFSRTEEGKIYQRAFGGQSLDFGKGGQAYRCACAADRTGHALLHTLYGQAMKHNTQFFVEYFALDLLMASDGSCQGVIALNMEDGTLHRFRSSQTILATGGYGRAYFSATSAHTCTGDGNAMVARAGLPLQDLEFVQFHPTGIYGAGCLITEGSRGEGGILRNSEGERFMERYAPTAKDLASRDVVSRSMTMEIREGRGVGPHKDHIYLHLNHLPPEVLKERLPGISETAAIFAGVDVTKEPIPVLPTVHYNMGGIPTNYHGEVVTIKGDDPDAVIPGLMAAGEAACASVHGANRLGANSLLDIVVFGRACANRVAEISKPGEKQKPLEKDAGEKTIAWLDRLRNSNGSLPTSTIRLNMQRIMQNNAAVFRTQETLEEGCQLIDKAWESFGDVQVKDRSMIWNSDLIETLELENLLINASITMHSAEARKESRGAHAREDFTKREDGEWMKHTLGYWEDEKVRLDYRPVHMDTLDDEIDTFPPKARVY</sequence>